<accession>A4QJC8</accession>
<evidence type="ECO:0000250" key="1"/>
<evidence type="ECO:0000255" key="2">
    <source>
        <dbReference type="HAMAP-Rule" id="MF_00610"/>
    </source>
</evidence>
<comment type="function">
    <text evidence="2">Component of the cytochrome b6-f complex, which mediates electron transfer between photosystem II (PSII) and photosystem I (PSI), cyclic electron flow around PSI, and state transitions.</text>
</comment>
<comment type="cofactor">
    <cofactor evidence="2">
        <name>heme</name>
        <dbReference type="ChEBI" id="CHEBI:30413"/>
    </cofactor>
    <text evidence="2">Binds 1 heme group covalently.</text>
</comment>
<comment type="subunit">
    <text evidence="1">The 4 large subunits of the cytochrome b6-f complex are cytochrome b6, subunit IV (17 kDa polypeptide, petD), cytochrome f and the Rieske protein, while the 4 small subunits are PetG, PetL, PetM and PetN. The complex functions as a dimer (By similarity).</text>
</comment>
<comment type="subcellular location">
    <subcellularLocation>
        <location evidence="2">Plastid</location>
        <location evidence="2">Chloroplast thylakoid membrane</location>
        <topology evidence="2">Single-pass membrane protein</topology>
    </subcellularLocation>
</comment>
<comment type="similarity">
    <text evidence="2">Belongs to the cytochrome f family.</text>
</comment>
<name>CYF_AETCO</name>
<geneLocation type="chloroplast"/>
<proteinExistence type="inferred from homology"/>
<organism>
    <name type="scientific">Aethionema cordifolium</name>
    <name type="common">Lebanon stonecress</name>
    <dbReference type="NCBI Taxonomy" id="434059"/>
    <lineage>
        <taxon>Eukaryota</taxon>
        <taxon>Viridiplantae</taxon>
        <taxon>Streptophyta</taxon>
        <taxon>Embryophyta</taxon>
        <taxon>Tracheophyta</taxon>
        <taxon>Spermatophyta</taxon>
        <taxon>Magnoliopsida</taxon>
        <taxon>eudicotyledons</taxon>
        <taxon>Gunneridae</taxon>
        <taxon>Pentapetalae</taxon>
        <taxon>rosids</taxon>
        <taxon>malvids</taxon>
        <taxon>Brassicales</taxon>
        <taxon>Brassicaceae</taxon>
        <taxon>Aethionemeae</taxon>
        <taxon>Aethionema</taxon>
    </lineage>
</organism>
<sequence>MQTRNTFSWTWIREEITRSISVSLMIYIITWSSISNAYPIFAQQNYENPREATGRIVCANCHLANKPVDIEVPQAVLPDTVFEAVVKIPYDMQLKQVLANGKKGALNVGAVLILPEGFELAPPDRISPEMKEKIGNLSFQNYRPNKKNILVIGPVPGQKYSEITFPILAPDPATNKDVHFLKYPIYVGGNRGRGQIYPDGSKSNNTVYNATAGGIISKILRKEKGGYEITIADASNGRQVIDIIPRGLELLVSEGESIKLDQPLTSNPNVGGFGQGDAEIVLQDPLRVQGLLFFLGSVVLAQIFLVLKKKQFEKVQLSEMNF</sequence>
<reference key="1">
    <citation type="submission" date="2007-03" db="EMBL/GenBank/DDBJ databases">
        <title>Sequencing analysis of Aethionema coridifolium chloroplast DNA.</title>
        <authorList>
            <person name="Hosouchi T."/>
            <person name="Tsuruoka H."/>
            <person name="Kotani H."/>
        </authorList>
    </citation>
    <scope>NUCLEOTIDE SEQUENCE [LARGE SCALE GENOMIC DNA]</scope>
</reference>
<feature type="signal peptide" evidence="2">
    <location>
        <begin position="1"/>
        <end position="35"/>
    </location>
</feature>
<feature type="chain" id="PRO_0000342044" description="Cytochrome f">
    <location>
        <begin position="36"/>
        <end position="322"/>
    </location>
</feature>
<feature type="transmembrane region" description="Helical" evidence="2">
    <location>
        <begin position="288"/>
        <end position="308"/>
    </location>
</feature>
<feature type="binding site" description="axial binding residue" evidence="2">
    <location>
        <position position="38"/>
    </location>
    <ligand>
        <name>heme</name>
        <dbReference type="ChEBI" id="CHEBI:30413"/>
    </ligand>
    <ligandPart>
        <name>Fe</name>
        <dbReference type="ChEBI" id="CHEBI:18248"/>
    </ligandPart>
</feature>
<feature type="binding site" description="covalent" evidence="2">
    <location>
        <position position="58"/>
    </location>
    <ligand>
        <name>heme</name>
        <dbReference type="ChEBI" id="CHEBI:30413"/>
    </ligand>
</feature>
<feature type="binding site" description="covalent" evidence="2">
    <location>
        <position position="61"/>
    </location>
    <ligand>
        <name>heme</name>
        <dbReference type="ChEBI" id="CHEBI:30413"/>
    </ligand>
</feature>
<feature type="binding site" description="axial binding residue" evidence="2">
    <location>
        <position position="62"/>
    </location>
    <ligand>
        <name>heme</name>
        <dbReference type="ChEBI" id="CHEBI:30413"/>
    </ligand>
    <ligandPart>
        <name>Fe</name>
        <dbReference type="ChEBI" id="CHEBI:18248"/>
    </ligandPart>
</feature>
<dbReference type="EMBL" id="AP009366">
    <property type="protein sequence ID" value="BAF49783.1"/>
    <property type="molecule type" value="Genomic_DNA"/>
</dbReference>
<dbReference type="RefSeq" id="YP_001122959.1">
    <property type="nucleotide sequence ID" value="NC_009265.1"/>
</dbReference>
<dbReference type="BMRB" id="A4QJC8"/>
<dbReference type="SMR" id="A4QJC8"/>
<dbReference type="GeneID" id="4968563"/>
<dbReference type="GO" id="GO:0009535">
    <property type="term" value="C:chloroplast thylakoid membrane"/>
    <property type="evidence" value="ECO:0007669"/>
    <property type="project" value="UniProtKB-SubCell"/>
</dbReference>
<dbReference type="GO" id="GO:0009055">
    <property type="term" value="F:electron transfer activity"/>
    <property type="evidence" value="ECO:0007669"/>
    <property type="project" value="UniProtKB-UniRule"/>
</dbReference>
<dbReference type="GO" id="GO:0020037">
    <property type="term" value="F:heme binding"/>
    <property type="evidence" value="ECO:0007669"/>
    <property type="project" value="InterPro"/>
</dbReference>
<dbReference type="GO" id="GO:0005506">
    <property type="term" value="F:iron ion binding"/>
    <property type="evidence" value="ECO:0007669"/>
    <property type="project" value="InterPro"/>
</dbReference>
<dbReference type="GO" id="GO:0015979">
    <property type="term" value="P:photosynthesis"/>
    <property type="evidence" value="ECO:0007669"/>
    <property type="project" value="UniProtKB-UniRule"/>
</dbReference>
<dbReference type="FunFam" id="1.20.5.700:FF:000001">
    <property type="entry name" value="Cytochrome f"/>
    <property type="match status" value="1"/>
</dbReference>
<dbReference type="FunFam" id="2.40.50.100:FF:000007">
    <property type="entry name" value="Cytochrome f"/>
    <property type="match status" value="1"/>
</dbReference>
<dbReference type="FunFam" id="2.60.40.830:FF:000001">
    <property type="entry name" value="Cytochrome f"/>
    <property type="match status" value="1"/>
</dbReference>
<dbReference type="Gene3D" id="2.40.50.100">
    <property type="match status" value="1"/>
</dbReference>
<dbReference type="Gene3D" id="2.60.40.830">
    <property type="entry name" value="Cytochrome f large domain"/>
    <property type="match status" value="1"/>
</dbReference>
<dbReference type="Gene3D" id="1.20.5.700">
    <property type="entry name" value="Single helix bin"/>
    <property type="match status" value="1"/>
</dbReference>
<dbReference type="HAMAP" id="MF_00610">
    <property type="entry name" value="Cytb6_f_cytF"/>
    <property type="match status" value="1"/>
</dbReference>
<dbReference type="InterPro" id="IPR024058">
    <property type="entry name" value="Cyt-f_TM"/>
</dbReference>
<dbReference type="InterPro" id="IPR002325">
    <property type="entry name" value="Cyt_f"/>
</dbReference>
<dbReference type="InterPro" id="IPR024094">
    <property type="entry name" value="Cyt_f_lg_dom"/>
</dbReference>
<dbReference type="InterPro" id="IPR036826">
    <property type="entry name" value="Cyt_f_lg_dom_sf"/>
</dbReference>
<dbReference type="InterPro" id="IPR011054">
    <property type="entry name" value="Rudment_hybrid_motif"/>
</dbReference>
<dbReference type="PANTHER" id="PTHR33288">
    <property type="match status" value="1"/>
</dbReference>
<dbReference type="PANTHER" id="PTHR33288:SF10">
    <property type="entry name" value="CYTOCHROME F"/>
    <property type="match status" value="1"/>
</dbReference>
<dbReference type="Pfam" id="PF01333">
    <property type="entry name" value="Apocytochr_F_C"/>
    <property type="match status" value="1"/>
</dbReference>
<dbReference type="Pfam" id="PF16639">
    <property type="entry name" value="Apocytochr_F_N"/>
    <property type="match status" value="1"/>
</dbReference>
<dbReference type="PRINTS" id="PR00610">
    <property type="entry name" value="CYTOCHROMEF"/>
</dbReference>
<dbReference type="SUPFAM" id="SSF103431">
    <property type="entry name" value="Cytochrome f subunit of the cytochrome b6f complex, transmembrane anchor"/>
    <property type="match status" value="1"/>
</dbReference>
<dbReference type="SUPFAM" id="SSF49441">
    <property type="entry name" value="Cytochrome f, large domain"/>
    <property type="match status" value="1"/>
</dbReference>
<dbReference type="SUPFAM" id="SSF51246">
    <property type="entry name" value="Rudiment single hybrid motif"/>
    <property type="match status" value="1"/>
</dbReference>
<dbReference type="PROSITE" id="PS51010">
    <property type="entry name" value="CYTF"/>
    <property type="match status" value="1"/>
</dbReference>
<keyword id="KW-0150">Chloroplast</keyword>
<keyword id="KW-0249">Electron transport</keyword>
<keyword id="KW-0349">Heme</keyword>
<keyword id="KW-0408">Iron</keyword>
<keyword id="KW-0472">Membrane</keyword>
<keyword id="KW-0479">Metal-binding</keyword>
<keyword id="KW-0602">Photosynthesis</keyword>
<keyword id="KW-0934">Plastid</keyword>
<keyword id="KW-0732">Signal</keyword>
<keyword id="KW-0793">Thylakoid</keyword>
<keyword id="KW-0812">Transmembrane</keyword>
<keyword id="KW-1133">Transmembrane helix</keyword>
<keyword id="KW-0813">Transport</keyword>
<protein>
    <recommendedName>
        <fullName evidence="2">Cytochrome f</fullName>
    </recommendedName>
</protein>
<gene>
    <name evidence="2" type="primary">petA</name>
</gene>